<name>RNFC_VIBC3</name>
<accession>A0A0H3AJC2</accession>
<protein>
    <recommendedName>
        <fullName evidence="1 4">Ion-translocating oxidoreductase complex subunit C</fullName>
        <ecNumber evidence="1 4">7.-.-.-</ecNumber>
    </recommendedName>
    <alternativeName>
        <fullName evidence="1 4">Rnf electron transport complex subunit C</fullName>
    </alternativeName>
</protein>
<gene>
    <name evidence="1" type="primary">rnfC</name>
    <name evidence="5" type="ordered locus">VC0395_A0536</name>
</gene>
<keyword id="KW-0004">4Fe-4S</keyword>
<keyword id="KW-0997">Cell inner membrane</keyword>
<keyword id="KW-1003">Cell membrane</keyword>
<keyword id="KW-0249">Electron transport</keyword>
<keyword id="KW-0408">Iron</keyword>
<keyword id="KW-0411">Iron-sulfur</keyword>
<keyword id="KW-0472">Membrane</keyword>
<keyword id="KW-0479">Metal-binding</keyword>
<keyword id="KW-0677">Repeat</keyword>
<keyword id="KW-1278">Translocase</keyword>
<keyword id="KW-0813">Transport</keyword>
<organism>
    <name type="scientific">Vibrio cholerae serotype O1 (strain ATCC 39541 / Classical Ogawa 395 / O395)</name>
    <dbReference type="NCBI Taxonomy" id="345073"/>
    <lineage>
        <taxon>Bacteria</taxon>
        <taxon>Pseudomonadati</taxon>
        <taxon>Pseudomonadota</taxon>
        <taxon>Gammaproteobacteria</taxon>
        <taxon>Vibrionales</taxon>
        <taxon>Vibrionaceae</taxon>
        <taxon>Vibrio</taxon>
    </lineage>
</organism>
<evidence type="ECO:0000255" key="1">
    <source>
        <dbReference type="HAMAP-Rule" id="MF_00461"/>
    </source>
</evidence>
<evidence type="ECO:0000256" key="2">
    <source>
        <dbReference type="SAM" id="MobiDB-lite"/>
    </source>
</evidence>
<evidence type="ECO:0000269" key="3">
    <source>
    </source>
</evidence>
<evidence type="ECO:0000305" key="4"/>
<evidence type="ECO:0000312" key="5">
    <source>
        <dbReference type="EMBL" id="ABQ20645.1"/>
    </source>
</evidence>
<feature type="chain" id="PRO_0000443488" description="Ion-translocating oxidoreductase complex subunit C">
    <location>
        <begin position="1"/>
        <end position="773"/>
    </location>
</feature>
<feature type="domain" description="4Fe-4S ferredoxin-type 1" evidence="1">
    <location>
        <begin position="368"/>
        <end position="398"/>
    </location>
</feature>
<feature type="domain" description="4Fe-4S ferredoxin-type 2" evidence="1">
    <location>
        <begin position="408"/>
        <end position="437"/>
    </location>
</feature>
<feature type="region of interest" description="Disordered" evidence="2">
    <location>
        <begin position="460"/>
        <end position="496"/>
    </location>
</feature>
<feature type="region of interest" description="Disordered" evidence="2">
    <location>
        <begin position="533"/>
        <end position="773"/>
    </location>
</feature>
<feature type="compositionally biased region" description="Basic and acidic residues" evidence="2">
    <location>
        <begin position="460"/>
        <end position="490"/>
    </location>
</feature>
<feature type="compositionally biased region" description="Low complexity" evidence="2">
    <location>
        <begin position="533"/>
        <end position="545"/>
    </location>
</feature>
<feature type="compositionally biased region" description="Basic and acidic residues" evidence="2">
    <location>
        <begin position="550"/>
        <end position="572"/>
    </location>
</feature>
<feature type="compositionally biased region" description="Low complexity" evidence="2">
    <location>
        <begin position="605"/>
        <end position="618"/>
    </location>
</feature>
<feature type="compositionally biased region" description="Polar residues" evidence="2">
    <location>
        <begin position="643"/>
        <end position="657"/>
    </location>
</feature>
<feature type="compositionally biased region" description="Polar residues" evidence="2">
    <location>
        <begin position="684"/>
        <end position="697"/>
    </location>
</feature>
<feature type="compositionally biased region" description="Polar residues" evidence="2">
    <location>
        <begin position="724"/>
        <end position="737"/>
    </location>
</feature>
<feature type="compositionally biased region" description="Polar residues" evidence="2">
    <location>
        <begin position="761"/>
        <end position="773"/>
    </location>
</feature>
<feature type="binding site" evidence="1">
    <location>
        <position position="378"/>
    </location>
    <ligand>
        <name>[4Fe-4S] cluster</name>
        <dbReference type="ChEBI" id="CHEBI:49883"/>
        <label>1</label>
    </ligand>
</feature>
<feature type="binding site" evidence="1">
    <location>
        <position position="381"/>
    </location>
    <ligand>
        <name>[4Fe-4S] cluster</name>
        <dbReference type="ChEBI" id="CHEBI:49883"/>
        <label>1</label>
    </ligand>
</feature>
<feature type="binding site" evidence="1">
    <location>
        <position position="384"/>
    </location>
    <ligand>
        <name>[4Fe-4S] cluster</name>
        <dbReference type="ChEBI" id="CHEBI:49883"/>
        <label>1</label>
    </ligand>
</feature>
<feature type="binding site" evidence="1">
    <location>
        <position position="388"/>
    </location>
    <ligand>
        <name>[4Fe-4S] cluster</name>
        <dbReference type="ChEBI" id="CHEBI:49883"/>
        <label>2</label>
    </ligand>
</feature>
<feature type="binding site" evidence="1">
    <location>
        <position position="417"/>
    </location>
    <ligand>
        <name>[4Fe-4S] cluster</name>
        <dbReference type="ChEBI" id="CHEBI:49883"/>
        <label>2</label>
    </ligand>
</feature>
<feature type="binding site" evidence="1">
    <location>
        <position position="420"/>
    </location>
    <ligand>
        <name>[4Fe-4S] cluster</name>
        <dbReference type="ChEBI" id="CHEBI:49883"/>
        <label>2</label>
    </ligand>
</feature>
<feature type="binding site" evidence="1">
    <location>
        <position position="423"/>
    </location>
    <ligand>
        <name>[4Fe-4S] cluster</name>
        <dbReference type="ChEBI" id="CHEBI:49883"/>
        <label>2</label>
    </ligand>
</feature>
<feature type="binding site" evidence="1">
    <location>
        <position position="427"/>
    </location>
    <ligand>
        <name>[4Fe-4S] cluster</name>
        <dbReference type="ChEBI" id="CHEBI:49883"/>
        <label>1</label>
    </ligand>
</feature>
<reference key="1">
    <citation type="submission" date="2007-03" db="EMBL/GenBank/DDBJ databases">
        <authorList>
            <person name="Heidelberg J."/>
        </authorList>
    </citation>
    <scope>NUCLEOTIDE SEQUENCE [LARGE SCALE GENOMIC DNA]</scope>
    <source>
        <strain>ATCC 39541 / Classical Ogawa 395 / O395</strain>
    </source>
</reference>
<reference key="2">
    <citation type="journal article" date="2015" name="Biochemistry">
        <title>Complete topology of the RNF complex from Vibrio cholerae.</title>
        <authorList>
            <person name="Hreha T.N."/>
            <person name="Mezic K.G."/>
            <person name="Herce H.D."/>
            <person name="Duffy E.B."/>
            <person name="Bourges A."/>
            <person name="Pryshchep S."/>
            <person name="Juarez O."/>
            <person name="Barquera B."/>
        </authorList>
    </citation>
    <scope>SUBCELLULAR LOCATION</scope>
    <source>
        <strain>ATCC 39541 / Classical Ogawa 395 / O395</strain>
    </source>
</reference>
<proteinExistence type="inferred from homology"/>
<comment type="function">
    <text evidence="1">Part of a membrane-bound complex that couples electron transfer with translocation of ions across the membrane.</text>
</comment>
<comment type="cofactor">
    <cofactor evidence="1">
        <name>[4Fe-4S] cluster</name>
        <dbReference type="ChEBI" id="CHEBI:49883"/>
    </cofactor>
    <text evidence="1">Binds 2 [4Fe-4S] clusters per subunit.</text>
</comment>
<comment type="subunit">
    <text evidence="1">The complex is composed of six subunits: RnfA, RnfB, RnfC, RnfD, RnfE and RnfG.</text>
</comment>
<comment type="subcellular location">
    <subcellularLocation>
        <location evidence="1 3">Cell inner membrane</location>
        <topology evidence="1 3">Peripheral membrane protein</topology>
    </subcellularLocation>
</comment>
<comment type="similarity">
    <text evidence="1">Belongs to the 4Fe4S bacterial-type ferredoxin family. RnfC subfamily.</text>
</comment>
<dbReference type="EC" id="7.-.-.-" evidence="1 4"/>
<dbReference type="EMBL" id="CP000627">
    <property type="protein sequence ID" value="ABQ20645.1"/>
    <property type="molecule type" value="Genomic_DNA"/>
</dbReference>
<dbReference type="SMR" id="A0A0H3AJC2"/>
<dbReference type="KEGG" id="vco:VC0395_A0536"/>
<dbReference type="eggNOG" id="COG4656">
    <property type="taxonomic scope" value="Bacteria"/>
</dbReference>
<dbReference type="Proteomes" id="UP000000249">
    <property type="component" value="Chromosome 2"/>
</dbReference>
<dbReference type="GO" id="GO:0005886">
    <property type="term" value="C:plasma membrane"/>
    <property type="evidence" value="ECO:0007669"/>
    <property type="project" value="UniProtKB-SubCell"/>
</dbReference>
<dbReference type="GO" id="GO:0051539">
    <property type="term" value="F:4 iron, 4 sulfur cluster binding"/>
    <property type="evidence" value="ECO:0007669"/>
    <property type="project" value="UniProtKB-KW"/>
</dbReference>
<dbReference type="GO" id="GO:0009055">
    <property type="term" value="F:electron transfer activity"/>
    <property type="evidence" value="ECO:0007669"/>
    <property type="project" value="InterPro"/>
</dbReference>
<dbReference type="GO" id="GO:0046872">
    <property type="term" value="F:metal ion binding"/>
    <property type="evidence" value="ECO:0007669"/>
    <property type="project" value="UniProtKB-KW"/>
</dbReference>
<dbReference type="GO" id="GO:0022900">
    <property type="term" value="P:electron transport chain"/>
    <property type="evidence" value="ECO:0007669"/>
    <property type="project" value="UniProtKB-UniRule"/>
</dbReference>
<dbReference type="FunFam" id="3.30.70.20:FF:000044">
    <property type="entry name" value="Ion-translocating oxidoreductase complex subunit C"/>
    <property type="match status" value="1"/>
</dbReference>
<dbReference type="FunFam" id="3.40.50.11540:FF:000004">
    <property type="entry name" value="Ion-translocating oxidoreductase complex subunit C"/>
    <property type="match status" value="1"/>
</dbReference>
<dbReference type="Gene3D" id="2.40.50.100">
    <property type="match status" value="1"/>
</dbReference>
<dbReference type="Gene3D" id="3.30.70.20">
    <property type="match status" value="1"/>
</dbReference>
<dbReference type="Gene3D" id="3.40.50.11540">
    <property type="entry name" value="NADH-ubiquinone oxidoreductase 51kDa subunit"/>
    <property type="match status" value="1"/>
</dbReference>
<dbReference type="HAMAP" id="MF_00461">
    <property type="entry name" value="RsxC_RnfC"/>
    <property type="match status" value="1"/>
</dbReference>
<dbReference type="InterPro" id="IPR017896">
    <property type="entry name" value="4Fe4S_Fe-S-bd"/>
</dbReference>
<dbReference type="InterPro" id="IPR017900">
    <property type="entry name" value="4Fe4S_Fe_S_CS"/>
</dbReference>
<dbReference type="InterPro" id="IPR010208">
    <property type="entry name" value="Ion_transpt_RnfC/RsxC"/>
</dbReference>
<dbReference type="InterPro" id="IPR011538">
    <property type="entry name" value="Nuo51_FMN-bd"/>
</dbReference>
<dbReference type="InterPro" id="IPR037225">
    <property type="entry name" value="Nuo51_FMN-bd_sf"/>
</dbReference>
<dbReference type="InterPro" id="IPR026902">
    <property type="entry name" value="RnfC_N"/>
</dbReference>
<dbReference type="InterPro" id="IPR019554">
    <property type="entry name" value="Soluble_ligand-bd"/>
</dbReference>
<dbReference type="NCBIfam" id="NF003454">
    <property type="entry name" value="PRK05035.1"/>
    <property type="match status" value="1"/>
</dbReference>
<dbReference type="NCBIfam" id="TIGR01945">
    <property type="entry name" value="rnfC"/>
    <property type="match status" value="1"/>
</dbReference>
<dbReference type="PANTHER" id="PTHR43034">
    <property type="entry name" value="ION-TRANSLOCATING OXIDOREDUCTASE COMPLEX SUBUNIT C"/>
    <property type="match status" value="1"/>
</dbReference>
<dbReference type="PANTHER" id="PTHR43034:SF2">
    <property type="entry name" value="ION-TRANSLOCATING OXIDOREDUCTASE COMPLEX SUBUNIT C"/>
    <property type="match status" value="1"/>
</dbReference>
<dbReference type="Pfam" id="PF01512">
    <property type="entry name" value="Complex1_51K"/>
    <property type="match status" value="1"/>
</dbReference>
<dbReference type="Pfam" id="PF12838">
    <property type="entry name" value="Fer4_7"/>
    <property type="match status" value="1"/>
</dbReference>
<dbReference type="Pfam" id="PF13375">
    <property type="entry name" value="RnfC_N"/>
    <property type="match status" value="1"/>
</dbReference>
<dbReference type="Pfam" id="PF10531">
    <property type="entry name" value="SLBB"/>
    <property type="match status" value="1"/>
</dbReference>
<dbReference type="SUPFAM" id="SSF46548">
    <property type="entry name" value="alpha-helical ferredoxin"/>
    <property type="match status" value="1"/>
</dbReference>
<dbReference type="SUPFAM" id="SSF142019">
    <property type="entry name" value="Nqo1 FMN-binding domain-like"/>
    <property type="match status" value="1"/>
</dbReference>
<dbReference type="PROSITE" id="PS00198">
    <property type="entry name" value="4FE4S_FER_1"/>
    <property type="match status" value="2"/>
</dbReference>
<dbReference type="PROSITE" id="PS51379">
    <property type="entry name" value="4FE4S_FER_2"/>
    <property type="match status" value="2"/>
</dbReference>
<sequence length="773" mass="83371">MLSLIEQIKSGKLWDFPGGIHPFENKHQSNRQPIINASIPNELVLPLKQHIGKAGDLLVKVGDRVLKGQPLTQYTSTFMLPIHAPTSGVISAIEPRTVAHPSGLSELCIVLTPDQQEEWFELQPQPDFQQLTPETLLELIRQAGISGMGGAGFPTAKKLQSGLSRTEILIINAAECEPYITADDVLMRQYAHEIIQGIEIVEHILKPKLTIIGIEDNKPEAVAALQQAAQDKPMVIRVIPTKYPSGGEKQLIKILTNLEVPKGGIPADIGLMVQNVGSLQAIARAIVHGEPLIRRVVTLTGDCFRKPRNVWALLGTPVQALLNEFGYKADKKLPRLIMGGPMMGFTLPHAQVPITKTANCILAPTRNELTSSDNEMACIRCGQCAEACPVSLLPQQLQWHAKAEEFDKCEELDLKDCIECGACAYVCPSEIPLVQYYRQAKAEIRTRSLEAEAAERAKARFEEKKARMERDKAERENRFKQAAEDRRKEMQQQGGSDAIAAAIERVKAQKAQLEPTDNSVKPAIAAAIARAKAKQAEAAQSGASEPDNSEMAKLREERKRQARERKAQKGEVTEASTSDGADDKKSAVAAAIARAKARKAEQQETESAAQPAQATPSSDDADPKKAAVAAAIARAKARKAEQGTESTAQPAQATPSSDEADPKKAAVAAAIARAKARKAEQQETESTAQPAQATPSSDDADPKKAAVAAAIARAKARKAEQQETKSTAQPEQATPSSDDADPKKAAVAAAIARAKARKAAQQSSSNLNAEEKD</sequence>